<evidence type="ECO:0000255" key="1">
    <source>
        <dbReference type="HAMAP-Rule" id="MF_00049"/>
    </source>
</evidence>
<protein>
    <recommendedName>
        <fullName evidence="1">Leucine--tRNA ligase</fullName>
        <ecNumber evidence="1">6.1.1.4</ecNumber>
    </recommendedName>
    <alternativeName>
        <fullName evidence="1">Leucyl-tRNA synthetase</fullName>
        <shortName evidence="1">LeuRS</shortName>
    </alternativeName>
</protein>
<name>SYL_BACAA</name>
<reference key="1">
    <citation type="submission" date="2009-04" db="EMBL/GenBank/DDBJ databases">
        <title>Genome sequence of Bacillus anthracis A0248.</title>
        <authorList>
            <person name="Dodson R.J."/>
            <person name="Munk A.C."/>
            <person name="Bruce D."/>
            <person name="Detter C."/>
            <person name="Tapia R."/>
            <person name="Sutton G."/>
            <person name="Sims D."/>
            <person name="Brettin T."/>
        </authorList>
    </citation>
    <scope>NUCLEOTIDE SEQUENCE [LARGE SCALE GENOMIC DNA]</scope>
    <source>
        <strain>A0248</strain>
    </source>
</reference>
<comment type="catalytic activity">
    <reaction evidence="1">
        <text>tRNA(Leu) + L-leucine + ATP = L-leucyl-tRNA(Leu) + AMP + diphosphate</text>
        <dbReference type="Rhea" id="RHEA:11688"/>
        <dbReference type="Rhea" id="RHEA-COMP:9613"/>
        <dbReference type="Rhea" id="RHEA-COMP:9622"/>
        <dbReference type="ChEBI" id="CHEBI:30616"/>
        <dbReference type="ChEBI" id="CHEBI:33019"/>
        <dbReference type="ChEBI" id="CHEBI:57427"/>
        <dbReference type="ChEBI" id="CHEBI:78442"/>
        <dbReference type="ChEBI" id="CHEBI:78494"/>
        <dbReference type="ChEBI" id="CHEBI:456215"/>
        <dbReference type="EC" id="6.1.1.4"/>
    </reaction>
</comment>
<comment type="subcellular location">
    <subcellularLocation>
        <location evidence="1">Cytoplasm</location>
    </subcellularLocation>
</comment>
<comment type="similarity">
    <text evidence="1">Belongs to the class-I aminoacyl-tRNA synthetase family.</text>
</comment>
<organism>
    <name type="scientific">Bacillus anthracis (strain A0248)</name>
    <dbReference type="NCBI Taxonomy" id="592021"/>
    <lineage>
        <taxon>Bacteria</taxon>
        <taxon>Bacillati</taxon>
        <taxon>Bacillota</taxon>
        <taxon>Bacilli</taxon>
        <taxon>Bacillales</taxon>
        <taxon>Bacillaceae</taxon>
        <taxon>Bacillus</taxon>
        <taxon>Bacillus cereus group</taxon>
    </lineage>
</organism>
<dbReference type="EC" id="6.1.1.4" evidence="1"/>
<dbReference type="EMBL" id="CP001598">
    <property type="protein sequence ID" value="ACQ46248.1"/>
    <property type="molecule type" value="Genomic_DNA"/>
</dbReference>
<dbReference type="RefSeq" id="WP_000009448.1">
    <property type="nucleotide sequence ID" value="NC_012659.1"/>
</dbReference>
<dbReference type="SMR" id="C3PBK0"/>
<dbReference type="GeneID" id="45024607"/>
<dbReference type="KEGG" id="bai:BAA_5004"/>
<dbReference type="HOGENOM" id="CLU_004427_0_0_9"/>
<dbReference type="GO" id="GO:0005829">
    <property type="term" value="C:cytosol"/>
    <property type="evidence" value="ECO:0007669"/>
    <property type="project" value="TreeGrafter"/>
</dbReference>
<dbReference type="GO" id="GO:0002161">
    <property type="term" value="F:aminoacyl-tRNA deacylase activity"/>
    <property type="evidence" value="ECO:0007669"/>
    <property type="project" value="InterPro"/>
</dbReference>
<dbReference type="GO" id="GO:0005524">
    <property type="term" value="F:ATP binding"/>
    <property type="evidence" value="ECO:0007669"/>
    <property type="project" value="UniProtKB-UniRule"/>
</dbReference>
<dbReference type="GO" id="GO:0004823">
    <property type="term" value="F:leucine-tRNA ligase activity"/>
    <property type="evidence" value="ECO:0007669"/>
    <property type="project" value="UniProtKB-UniRule"/>
</dbReference>
<dbReference type="GO" id="GO:0006429">
    <property type="term" value="P:leucyl-tRNA aminoacylation"/>
    <property type="evidence" value="ECO:0007669"/>
    <property type="project" value="UniProtKB-UniRule"/>
</dbReference>
<dbReference type="CDD" id="cd07958">
    <property type="entry name" value="Anticodon_Ia_Leu_BEm"/>
    <property type="match status" value="1"/>
</dbReference>
<dbReference type="CDD" id="cd00812">
    <property type="entry name" value="LeuRS_core"/>
    <property type="match status" value="1"/>
</dbReference>
<dbReference type="FunFam" id="1.10.730.10:FF:000012">
    <property type="entry name" value="Leucine--tRNA ligase"/>
    <property type="match status" value="1"/>
</dbReference>
<dbReference type="FunFam" id="1.10.730.10:FF:000018">
    <property type="entry name" value="Leucine--tRNA ligase"/>
    <property type="match status" value="1"/>
</dbReference>
<dbReference type="FunFam" id="3.10.20.590:FF:000001">
    <property type="entry name" value="Leucine--tRNA ligase"/>
    <property type="match status" value="1"/>
</dbReference>
<dbReference type="FunFam" id="3.40.50.620:FF:000056">
    <property type="entry name" value="Leucine--tRNA ligase"/>
    <property type="match status" value="1"/>
</dbReference>
<dbReference type="FunFam" id="3.40.50.620:FF:000077">
    <property type="entry name" value="Leucine--tRNA ligase"/>
    <property type="match status" value="1"/>
</dbReference>
<dbReference type="Gene3D" id="3.10.20.590">
    <property type="match status" value="1"/>
</dbReference>
<dbReference type="Gene3D" id="3.40.50.620">
    <property type="entry name" value="HUPs"/>
    <property type="match status" value="2"/>
</dbReference>
<dbReference type="Gene3D" id="1.10.730.10">
    <property type="entry name" value="Isoleucyl-tRNA Synthetase, Domain 1"/>
    <property type="match status" value="1"/>
</dbReference>
<dbReference type="HAMAP" id="MF_00049_B">
    <property type="entry name" value="Leu_tRNA_synth_B"/>
    <property type="match status" value="1"/>
</dbReference>
<dbReference type="InterPro" id="IPR001412">
    <property type="entry name" value="aa-tRNA-synth_I_CS"/>
</dbReference>
<dbReference type="InterPro" id="IPR002300">
    <property type="entry name" value="aa-tRNA-synth_Ia"/>
</dbReference>
<dbReference type="InterPro" id="IPR002302">
    <property type="entry name" value="Leu-tRNA-ligase"/>
</dbReference>
<dbReference type="InterPro" id="IPR025709">
    <property type="entry name" value="Leu_tRNA-synth_edit"/>
</dbReference>
<dbReference type="InterPro" id="IPR013155">
    <property type="entry name" value="M/V/L/I-tRNA-synth_anticd-bd"/>
</dbReference>
<dbReference type="InterPro" id="IPR015413">
    <property type="entry name" value="Methionyl/Leucyl_tRNA_Synth"/>
</dbReference>
<dbReference type="InterPro" id="IPR014729">
    <property type="entry name" value="Rossmann-like_a/b/a_fold"/>
</dbReference>
<dbReference type="InterPro" id="IPR009080">
    <property type="entry name" value="tRNAsynth_Ia_anticodon-bd"/>
</dbReference>
<dbReference type="InterPro" id="IPR009008">
    <property type="entry name" value="Val/Leu/Ile-tRNA-synth_edit"/>
</dbReference>
<dbReference type="NCBIfam" id="TIGR00396">
    <property type="entry name" value="leuS_bact"/>
    <property type="match status" value="1"/>
</dbReference>
<dbReference type="PANTHER" id="PTHR43740:SF2">
    <property type="entry name" value="LEUCINE--TRNA LIGASE, MITOCHONDRIAL"/>
    <property type="match status" value="1"/>
</dbReference>
<dbReference type="PANTHER" id="PTHR43740">
    <property type="entry name" value="LEUCYL-TRNA SYNTHETASE"/>
    <property type="match status" value="1"/>
</dbReference>
<dbReference type="Pfam" id="PF08264">
    <property type="entry name" value="Anticodon_1"/>
    <property type="match status" value="1"/>
</dbReference>
<dbReference type="Pfam" id="PF00133">
    <property type="entry name" value="tRNA-synt_1"/>
    <property type="match status" value="1"/>
</dbReference>
<dbReference type="Pfam" id="PF13603">
    <property type="entry name" value="tRNA-synt_1_2"/>
    <property type="match status" value="1"/>
</dbReference>
<dbReference type="Pfam" id="PF09334">
    <property type="entry name" value="tRNA-synt_1g"/>
    <property type="match status" value="1"/>
</dbReference>
<dbReference type="PRINTS" id="PR00985">
    <property type="entry name" value="TRNASYNTHLEU"/>
</dbReference>
<dbReference type="SUPFAM" id="SSF47323">
    <property type="entry name" value="Anticodon-binding domain of a subclass of class I aminoacyl-tRNA synthetases"/>
    <property type="match status" value="1"/>
</dbReference>
<dbReference type="SUPFAM" id="SSF52374">
    <property type="entry name" value="Nucleotidylyl transferase"/>
    <property type="match status" value="1"/>
</dbReference>
<dbReference type="SUPFAM" id="SSF50677">
    <property type="entry name" value="ValRS/IleRS/LeuRS editing domain"/>
    <property type="match status" value="1"/>
</dbReference>
<dbReference type="PROSITE" id="PS00178">
    <property type="entry name" value="AA_TRNA_LIGASE_I"/>
    <property type="match status" value="1"/>
</dbReference>
<proteinExistence type="inferred from homology"/>
<feature type="chain" id="PRO_1000199173" description="Leucine--tRNA ligase">
    <location>
        <begin position="1"/>
        <end position="802"/>
    </location>
</feature>
<feature type="short sequence motif" description="'HIGH' region">
    <location>
        <begin position="40"/>
        <end position="51"/>
    </location>
</feature>
<feature type="short sequence motif" description="'KMSKS' region">
    <location>
        <begin position="576"/>
        <end position="580"/>
    </location>
</feature>
<feature type="binding site" evidence="1">
    <location>
        <position position="579"/>
    </location>
    <ligand>
        <name>ATP</name>
        <dbReference type="ChEBI" id="CHEBI:30616"/>
    </ligand>
</feature>
<accession>C3PBK0</accession>
<sequence length="802" mass="91273">MSFNHQEIEKKWQGYWEENKTFRTPDETEKPKFYALDMFPYPSGAGLHVGHPEGYTATDILSRMKRMQGYNVLHPMGWDAFGLPAEQYALDTGNSPAEFTEHNINTFRNQIKSLGFSYDWDREVNTTDPNYYKWTQWIFLKLFEKGLAYVDEVPVNWCPALGTVLANEEIIDGKSERGGHPVERRPMRQWMLKITAYGDRLLEDLDELDWPESLKDMQRNWIGRSEGAEVHFNIDGTDEKFTVFTTRPDTLFGASYCVLAPEHALVADITTADQKEAVEAYINSVKMKSDLERTELAKEKTGVFTGAYAVNPVNGEKLPIWIADYVLATYGTGAVMAVPAHDERDYEFASTFNLPMKEVVKGGDITKEAYTGDGAHVNSAFLDGLNKEEAIAKMIEWLEVTSAGNQKVTYRLRDWLFSRQRYWGEPIPVIHWEDGTMTAVKEEELPLVLPKTENIRPSGTGESPLANIDEWVNVVDPETGKKGRRETNTMPQWAGSCWYYLRYIDPNNSEALVDPEKVKQWLPVDIYIGGAEHAVLHLLYARFWHKVLYDIGVVPTKEPFQQLFNQGMILGENNEKMSKSKGNVVNPDDIVASHGADTLRLYEMFMGPLDASIAWSENGLDGARRFLDRVWRLFVQDNGELSEKITDAPNKDLEKAYHQTVKKVTEDYAELRFNTAISQMMVFINDAYKAETLPKEYVEGFVKMIAPVAPHIGEELWSKLGYNETITYASWPTFDESKLVEDEVEIVVQVMGKVRAKLTMSKDASKDEMEKLALEAIQDQIEGKTVRKVIVVPGKLVNVVAN</sequence>
<keyword id="KW-0030">Aminoacyl-tRNA synthetase</keyword>
<keyword id="KW-0067">ATP-binding</keyword>
<keyword id="KW-0963">Cytoplasm</keyword>
<keyword id="KW-0436">Ligase</keyword>
<keyword id="KW-0547">Nucleotide-binding</keyword>
<keyword id="KW-0648">Protein biosynthesis</keyword>
<gene>
    <name evidence="1" type="primary">leuS</name>
    <name type="ordered locus">BAA_5004</name>
</gene>